<feature type="chain" id="PRO_0000059502" description="Glycerol kinase 2">
    <location>
        <begin position="1"/>
        <end position="512"/>
    </location>
</feature>
<feature type="binding site" evidence="1">
    <location>
        <position position="18"/>
    </location>
    <ligand>
        <name>ADP</name>
        <dbReference type="ChEBI" id="CHEBI:456216"/>
    </ligand>
</feature>
<feature type="binding site" evidence="1">
    <location>
        <position position="18"/>
    </location>
    <ligand>
        <name>ATP</name>
        <dbReference type="ChEBI" id="CHEBI:30616"/>
    </ligand>
</feature>
<feature type="binding site" evidence="1">
    <location>
        <position position="18"/>
    </location>
    <ligand>
        <name>sn-glycerol 3-phosphate</name>
        <dbReference type="ChEBI" id="CHEBI:57597"/>
    </ligand>
</feature>
<feature type="binding site" evidence="1">
    <location>
        <position position="19"/>
    </location>
    <ligand>
        <name>ATP</name>
        <dbReference type="ChEBI" id="CHEBI:30616"/>
    </ligand>
</feature>
<feature type="binding site" evidence="1">
    <location>
        <position position="20"/>
    </location>
    <ligand>
        <name>ATP</name>
        <dbReference type="ChEBI" id="CHEBI:30616"/>
    </ligand>
</feature>
<feature type="binding site" evidence="1">
    <location>
        <position position="22"/>
    </location>
    <ligand>
        <name>ADP</name>
        <dbReference type="ChEBI" id="CHEBI:456216"/>
    </ligand>
</feature>
<feature type="binding site" evidence="1">
    <location>
        <position position="88"/>
    </location>
    <ligand>
        <name>glycerol</name>
        <dbReference type="ChEBI" id="CHEBI:17754"/>
    </ligand>
</feature>
<feature type="binding site" evidence="1">
    <location>
        <position position="88"/>
    </location>
    <ligand>
        <name>sn-glycerol 3-phosphate</name>
        <dbReference type="ChEBI" id="CHEBI:57597"/>
    </ligand>
</feature>
<feature type="binding site" evidence="1">
    <location>
        <position position="89"/>
    </location>
    <ligand>
        <name>glycerol</name>
        <dbReference type="ChEBI" id="CHEBI:17754"/>
    </ligand>
</feature>
<feature type="binding site" evidence="1">
    <location>
        <position position="89"/>
    </location>
    <ligand>
        <name>sn-glycerol 3-phosphate</name>
        <dbReference type="ChEBI" id="CHEBI:57597"/>
    </ligand>
</feature>
<feature type="binding site" evidence="1">
    <location>
        <position position="140"/>
    </location>
    <ligand>
        <name>glycerol</name>
        <dbReference type="ChEBI" id="CHEBI:17754"/>
    </ligand>
</feature>
<feature type="binding site" evidence="1">
    <location>
        <position position="140"/>
    </location>
    <ligand>
        <name>sn-glycerol 3-phosphate</name>
        <dbReference type="ChEBI" id="CHEBI:57597"/>
    </ligand>
</feature>
<feature type="binding site" evidence="1">
    <location>
        <position position="255"/>
    </location>
    <ligand>
        <name>glycerol</name>
        <dbReference type="ChEBI" id="CHEBI:17754"/>
    </ligand>
</feature>
<feature type="binding site" evidence="1">
    <location>
        <position position="255"/>
    </location>
    <ligand>
        <name>sn-glycerol 3-phosphate</name>
        <dbReference type="ChEBI" id="CHEBI:57597"/>
    </ligand>
</feature>
<feature type="binding site" evidence="1">
    <location>
        <position position="256"/>
    </location>
    <ligand>
        <name>glycerol</name>
        <dbReference type="ChEBI" id="CHEBI:17754"/>
    </ligand>
</feature>
<feature type="binding site" evidence="1">
    <location>
        <position position="277"/>
    </location>
    <ligand>
        <name>ADP</name>
        <dbReference type="ChEBI" id="CHEBI:456216"/>
    </ligand>
</feature>
<feature type="binding site" evidence="1">
    <location>
        <position position="277"/>
    </location>
    <ligand>
        <name>ATP</name>
        <dbReference type="ChEBI" id="CHEBI:30616"/>
    </ligand>
</feature>
<feature type="binding site" evidence="1">
    <location>
        <position position="321"/>
    </location>
    <ligand>
        <name>ADP</name>
        <dbReference type="ChEBI" id="CHEBI:456216"/>
    </ligand>
</feature>
<feature type="binding site" evidence="1">
    <location>
        <position position="321"/>
    </location>
    <ligand>
        <name>ATP</name>
        <dbReference type="ChEBI" id="CHEBI:30616"/>
    </ligand>
</feature>
<feature type="binding site" evidence="1">
    <location>
        <position position="325"/>
    </location>
    <ligand>
        <name>ATP</name>
        <dbReference type="ChEBI" id="CHEBI:30616"/>
    </ligand>
</feature>
<feature type="binding site" evidence="1">
    <location>
        <position position="422"/>
    </location>
    <ligand>
        <name>ADP</name>
        <dbReference type="ChEBI" id="CHEBI:456216"/>
    </ligand>
</feature>
<feature type="binding site" evidence="1">
    <location>
        <position position="422"/>
    </location>
    <ligand>
        <name>ATP</name>
        <dbReference type="ChEBI" id="CHEBI:30616"/>
    </ligand>
</feature>
<feature type="binding site" evidence="1">
    <location>
        <position position="426"/>
    </location>
    <ligand>
        <name>ADP</name>
        <dbReference type="ChEBI" id="CHEBI:456216"/>
    </ligand>
</feature>
<gene>
    <name evidence="1" type="primary">glpK2</name>
    <name type="synonym">glpK1</name>
    <name type="ordered locus">SCO1660</name>
    <name type="ORF">SCI52.02</name>
</gene>
<proteinExistence type="inferred from homology"/>
<reference key="1">
    <citation type="journal article" date="2002" name="Nature">
        <title>Complete genome sequence of the model actinomycete Streptomyces coelicolor A3(2).</title>
        <authorList>
            <person name="Bentley S.D."/>
            <person name="Chater K.F."/>
            <person name="Cerdeno-Tarraga A.-M."/>
            <person name="Challis G.L."/>
            <person name="Thomson N.R."/>
            <person name="James K.D."/>
            <person name="Harris D.E."/>
            <person name="Quail M.A."/>
            <person name="Kieser H."/>
            <person name="Harper D."/>
            <person name="Bateman A."/>
            <person name="Brown S."/>
            <person name="Chandra G."/>
            <person name="Chen C.W."/>
            <person name="Collins M."/>
            <person name="Cronin A."/>
            <person name="Fraser A."/>
            <person name="Goble A."/>
            <person name="Hidalgo J."/>
            <person name="Hornsby T."/>
            <person name="Howarth S."/>
            <person name="Huang C.-H."/>
            <person name="Kieser T."/>
            <person name="Larke L."/>
            <person name="Murphy L.D."/>
            <person name="Oliver K."/>
            <person name="O'Neil S."/>
            <person name="Rabbinowitsch E."/>
            <person name="Rajandream M.A."/>
            <person name="Rutherford K.M."/>
            <person name="Rutter S."/>
            <person name="Seeger K."/>
            <person name="Saunders D."/>
            <person name="Sharp S."/>
            <person name="Squares R."/>
            <person name="Squares S."/>
            <person name="Taylor K."/>
            <person name="Warren T."/>
            <person name="Wietzorrek A."/>
            <person name="Woodward J.R."/>
            <person name="Barrell B.G."/>
            <person name="Parkhill J."/>
            <person name="Hopwood D.A."/>
        </authorList>
    </citation>
    <scope>NUCLEOTIDE SEQUENCE [LARGE SCALE GENOMIC DNA]</scope>
    <source>
        <strain>ATCC BAA-471 / A3(2) / M145</strain>
    </source>
</reference>
<organism>
    <name type="scientific">Streptomyces coelicolor (strain ATCC BAA-471 / A3(2) / M145)</name>
    <dbReference type="NCBI Taxonomy" id="100226"/>
    <lineage>
        <taxon>Bacteria</taxon>
        <taxon>Bacillati</taxon>
        <taxon>Actinomycetota</taxon>
        <taxon>Actinomycetes</taxon>
        <taxon>Kitasatosporales</taxon>
        <taxon>Streptomycetaceae</taxon>
        <taxon>Streptomyces</taxon>
        <taxon>Streptomyces albidoflavus group</taxon>
    </lineage>
</organism>
<dbReference type="EC" id="2.7.1.30" evidence="1"/>
<dbReference type="EMBL" id="AL939109">
    <property type="protein sequence ID" value="CAC36363.1"/>
    <property type="molecule type" value="Genomic_DNA"/>
</dbReference>
<dbReference type="RefSeq" id="NP_625935.1">
    <property type="nucleotide sequence ID" value="NC_003888.3"/>
</dbReference>
<dbReference type="SMR" id="Q9ADA7"/>
<dbReference type="STRING" id="100226.gene:17759253"/>
<dbReference type="PaxDb" id="100226-SCO1660"/>
<dbReference type="KEGG" id="sco:SCO1660"/>
<dbReference type="PATRIC" id="fig|100226.15.peg.1677"/>
<dbReference type="eggNOG" id="COG0554">
    <property type="taxonomic scope" value="Bacteria"/>
</dbReference>
<dbReference type="HOGENOM" id="CLU_009281_2_3_11"/>
<dbReference type="InParanoid" id="Q9ADA7"/>
<dbReference type="OrthoDB" id="9805576at2"/>
<dbReference type="PhylomeDB" id="Q9ADA7"/>
<dbReference type="UniPathway" id="UPA00618">
    <property type="reaction ID" value="UER00672"/>
</dbReference>
<dbReference type="Proteomes" id="UP000001973">
    <property type="component" value="Chromosome"/>
</dbReference>
<dbReference type="GO" id="GO:0005829">
    <property type="term" value="C:cytosol"/>
    <property type="evidence" value="ECO:0000318"/>
    <property type="project" value="GO_Central"/>
</dbReference>
<dbReference type="GO" id="GO:0005524">
    <property type="term" value="F:ATP binding"/>
    <property type="evidence" value="ECO:0007669"/>
    <property type="project" value="UniProtKB-UniRule"/>
</dbReference>
<dbReference type="GO" id="GO:0004370">
    <property type="term" value="F:glycerol kinase activity"/>
    <property type="evidence" value="ECO:0000250"/>
    <property type="project" value="UniProtKB"/>
</dbReference>
<dbReference type="GO" id="GO:0019563">
    <property type="term" value="P:glycerol catabolic process"/>
    <property type="evidence" value="ECO:0000318"/>
    <property type="project" value="GO_Central"/>
</dbReference>
<dbReference type="GO" id="GO:0006071">
    <property type="term" value="P:glycerol metabolic process"/>
    <property type="evidence" value="ECO:0000250"/>
    <property type="project" value="UniProtKB"/>
</dbReference>
<dbReference type="GO" id="GO:0006072">
    <property type="term" value="P:glycerol-3-phosphate metabolic process"/>
    <property type="evidence" value="ECO:0007669"/>
    <property type="project" value="InterPro"/>
</dbReference>
<dbReference type="CDD" id="cd07769">
    <property type="entry name" value="ASKHA_NBD_FGGY_GK"/>
    <property type="match status" value="1"/>
</dbReference>
<dbReference type="FunFam" id="3.30.420.40:FF:000007">
    <property type="entry name" value="Glycerol kinase"/>
    <property type="match status" value="1"/>
</dbReference>
<dbReference type="FunFam" id="3.30.420.40:FF:000008">
    <property type="entry name" value="Glycerol kinase"/>
    <property type="match status" value="1"/>
</dbReference>
<dbReference type="Gene3D" id="3.30.420.40">
    <property type="match status" value="2"/>
</dbReference>
<dbReference type="HAMAP" id="MF_00186">
    <property type="entry name" value="Glycerol_kin"/>
    <property type="match status" value="1"/>
</dbReference>
<dbReference type="InterPro" id="IPR043129">
    <property type="entry name" value="ATPase_NBD"/>
</dbReference>
<dbReference type="InterPro" id="IPR000577">
    <property type="entry name" value="Carb_kinase_FGGY"/>
</dbReference>
<dbReference type="InterPro" id="IPR018483">
    <property type="entry name" value="Carb_kinase_FGGY_CS"/>
</dbReference>
<dbReference type="InterPro" id="IPR018485">
    <property type="entry name" value="FGGY_C"/>
</dbReference>
<dbReference type="InterPro" id="IPR018484">
    <property type="entry name" value="FGGY_N"/>
</dbReference>
<dbReference type="InterPro" id="IPR005999">
    <property type="entry name" value="Glycerol_kin"/>
</dbReference>
<dbReference type="NCBIfam" id="TIGR01311">
    <property type="entry name" value="glycerol_kin"/>
    <property type="match status" value="1"/>
</dbReference>
<dbReference type="NCBIfam" id="NF000756">
    <property type="entry name" value="PRK00047.1"/>
    <property type="match status" value="1"/>
</dbReference>
<dbReference type="PANTHER" id="PTHR10196:SF69">
    <property type="entry name" value="GLYCEROL KINASE"/>
    <property type="match status" value="1"/>
</dbReference>
<dbReference type="PANTHER" id="PTHR10196">
    <property type="entry name" value="SUGAR KINASE"/>
    <property type="match status" value="1"/>
</dbReference>
<dbReference type="Pfam" id="PF02782">
    <property type="entry name" value="FGGY_C"/>
    <property type="match status" value="1"/>
</dbReference>
<dbReference type="Pfam" id="PF00370">
    <property type="entry name" value="FGGY_N"/>
    <property type="match status" value="1"/>
</dbReference>
<dbReference type="PIRSF" id="PIRSF000538">
    <property type="entry name" value="GlpK"/>
    <property type="match status" value="1"/>
</dbReference>
<dbReference type="SUPFAM" id="SSF53067">
    <property type="entry name" value="Actin-like ATPase domain"/>
    <property type="match status" value="2"/>
</dbReference>
<dbReference type="PROSITE" id="PS00445">
    <property type="entry name" value="FGGY_KINASES_2"/>
    <property type="match status" value="1"/>
</dbReference>
<keyword id="KW-0067">ATP-binding</keyword>
<keyword id="KW-0319">Glycerol metabolism</keyword>
<keyword id="KW-0418">Kinase</keyword>
<keyword id="KW-0547">Nucleotide-binding</keyword>
<keyword id="KW-1185">Reference proteome</keyword>
<keyword id="KW-0808">Transferase</keyword>
<name>GLPK2_STRCO</name>
<accession>Q9ADA7</accession>
<evidence type="ECO:0000255" key="1">
    <source>
        <dbReference type="HAMAP-Rule" id="MF_00186"/>
    </source>
</evidence>
<protein>
    <recommendedName>
        <fullName evidence="1">Glycerol kinase 2</fullName>
        <ecNumber evidence="1">2.7.1.30</ecNumber>
    </recommendedName>
    <alternativeName>
        <fullName evidence="1">ATP:glycerol 3-phosphotransferase 2</fullName>
    </alternativeName>
    <alternativeName>
        <fullName evidence="1">Glycerokinase 2</fullName>
        <shortName evidence="1">GK 2</shortName>
    </alternativeName>
</protein>
<sequence>MTDSHTAGPFIAAIDQGTTSSRCIVFDRDGRIVSVDQKEHEQIFPKPGWVEHDATEIWTNVQEVVAGAVEKAGITRDDIKAIGITNQRETTLVWDKNTGEPVHNAIVWQDTRTDALCKELGRNVGQDRFRRETGLPLASYFAGPKARWLLDNVDGLRERAEAGDLLFGTMDTWVIWNLTGGVNGGKHVTDVTNASRTMLMNLHTMAWDEKIAESIGVPMQMLPEIRSSAEVYGEITGGRLGELLGGIPVASALGDQQAALFGQTCFSEGETKSTYGTGTFMVMNTGDKLINSYSGLLTTVGYKIGDQDTVYALEGSIAVTGSLVQWMRDQMGLISTAAEIETLALTVEDNGGAYFVPAFSGLFAPYWRSDARGVIAGLTRYVTKAHLARAVLEATAWQTREIADAMTKDSGVELTALKVDGGMTSNNLLMQTLADFVDAPVVRPMVAETTCLGAAYAAGLAVGFWNSTDDLRANWRRAAEWTPRMDADIRDREYKSWLKAVERTMGWLEDEE</sequence>
<comment type="function">
    <text evidence="1">Key enzyme in the regulation of glycerol uptake and metabolism. Catalyzes the phosphorylation of glycerol to yield sn-glycerol 3-phosphate.</text>
</comment>
<comment type="catalytic activity">
    <reaction evidence="1">
        <text>glycerol + ATP = sn-glycerol 3-phosphate + ADP + H(+)</text>
        <dbReference type="Rhea" id="RHEA:21644"/>
        <dbReference type="ChEBI" id="CHEBI:15378"/>
        <dbReference type="ChEBI" id="CHEBI:17754"/>
        <dbReference type="ChEBI" id="CHEBI:30616"/>
        <dbReference type="ChEBI" id="CHEBI:57597"/>
        <dbReference type="ChEBI" id="CHEBI:456216"/>
        <dbReference type="EC" id="2.7.1.30"/>
    </reaction>
</comment>
<comment type="activity regulation">
    <text evidence="1">Inhibited by fructose 1,6-bisphosphate (FBP).</text>
</comment>
<comment type="pathway">
    <text evidence="1">Polyol metabolism; glycerol degradation via glycerol kinase pathway; sn-glycerol 3-phosphate from glycerol: step 1/1.</text>
</comment>
<comment type="similarity">
    <text evidence="1">Belongs to the FGGY kinase family.</text>
</comment>